<accession>Q0UK49</accession>
<proteinExistence type="evidence at protein level"/>
<sequence>MGLQFLAPGEKVFPSLHRIIISTFALIAAYIFIVRPLRNILFHPLKKYPGPKLFGASSIPYGFYYMTGKWHLKIRNLHATYGPIVRIGPDELSYACPEAWEDIYGRYVPTKRRENPKPVWYCSPDAHDMVGASLGDHGRMRRVMAPGFTYSAMCKQEPLIKGHVDMFLSKLCSLCGDGRAEVNILDWLTYCTFDLIGDLSFGEPFGCMENNMLHPWLQLVFANIYITHIILLCQRIPFFYLFLPIKTTYQLWRDFRRHVVLLREVVERRLSLSTPRDDFLDVMTTKQTSTLYMTKEEIFKNAILLTGGGAETTSSSLSGMMYMLTMRPDVKEKILEELRDTFPSEDDINMRSVAQLTYTGAFIEESMRYYPPGPNTMWRITPPAGNTILGDYIPGNTIVGIPHRVLYRSEAYWKDADGFRPERWLPDSQRPAEFDEDKREGFHPFSYGPRACIAMNLAYAEMRYILARFLWHFDIEATKESKKWMDDQKAYLVWDKPGLFVHLKPRAGVKVAA</sequence>
<dbReference type="EC" id="1.-.-.-" evidence="6"/>
<dbReference type="EMBL" id="CH445335">
    <property type="protein sequence ID" value="EAT85331.1"/>
    <property type="molecule type" value="Genomic_DNA"/>
</dbReference>
<dbReference type="RefSeq" id="XP_001798192.1">
    <property type="nucleotide sequence ID" value="XM_001798140.1"/>
</dbReference>
<dbReference type="SMR" id="Q0UK49"/>
<dbReference type="EnsemblFungi" id="SNOT_07865">
    <property type="protein sequence ID" value="SNOT_07865"/>
    <property type="gene ID" value="SNOG_07865"/>
</dbReference>
<dbReference type="GeneID" id="5975085"/>
<dbReference type="KEGG" id="pno:SNOG_07865"/>
<dbReference type="VEuPathDB" id="FungiDB:JI435_078650"/>
<dbReference type="eggNOG" id="KOG0158">
    <property type="taxonomic scope" value="Eukaryota"/>
</dbReference>
<dbReference type="HOGENOM" id="CLU_001570_14_11_1"/>
<dbReference type="InParanoid" id="Q0UK49"/>
<dbReference type="OMA" id="CMRATKL"/>
<dbReference type="OrthoDB" id="1470350at2759"/>
<dbReference type="Proteomes" id="UP000001055">
    <property type="component" value="Unassembled WGS sequence"/>
</dbReference>
<dbReference type="GO" id="GO:0016020">
    <property type="term" value="C:membrane"/>
    <property type="evidence" value="ECO:0007669"/>
    <property type="project" value="UniProtKB-SubCell"/>
</dbReference>
<dbReference type="GO" id="GO:0020037">
    <property type="term" value="F:heme binding"/>
    <property type="evidence" value="ECO:0007669"/>
    <property type="project" value="InterPro"/>
</dbReference>
<dbReference type="GO" id="GO:0005506">
    <property type="term" value="F:iron ion binding"/>
    <property type="evidence" value="ECO:0007669"/>
    <property type="project" value="InterPro"/>
</dbReference>
<dbReference type="GO" id="GO:0004497">
    <property type="term" value="F:monooxygenase activity"/>
    <property type="evidence" value="ECO:0007669"/>
    <property type="project" value="UniProtKB-KW"/>
</dbReference>
<dbReference type="GO" id="GO:0016705">
    <property type="term" value="F:oxidoreductase activity, acting on paired donors, with incorporation or reduction of molecular oxygen"/>
    <property type="evidence" value="ECO:0007669"/>
    <property type="project" value="InterPro"/>
</dbReference>
<dbReference type="CDD" id="cd11058">
    <property type="entry name" value="CYP60B-like"/>
    <property type="match status" value="1"/>
</dbReference>
<dbReference type="FunFam" id="1.10.630.10:FF:000063">
    <property type="entry name" value="Cytochrome P450 monooxygenase"/>
    <property type="match status" value="1"/>
</dbReference>
<dbReference type="Gene3D" id="1.10.630.10">
    <property type="entry name" value="Cytochrome P450"/>
    <property type="match status" value="1"/>
</dbReference>
<dbReference type="InterPro" id="IPR001128">
    <property type="entry name" value="Cyt_P450"/>
</dbReference>
<dbReference type="InterPro" id="IPR017972">
    <property type="entry name" value="Cyt_P450_CS"/>
</dbReference>
<dbReference type="InterPro" id="IPR002401">
    <property type="entry name" value="Cyt_P450_E_grp-I"/>
</dbReference>
<dbReference type="InterPro" id="IPR036396">
    <property type="entry name" value="Cyt_P450_sf"/>
</dbReference>
<dbReference type="InterPro" id="IPR050121">
    <property type="entry name" value="Cytochrome_P450_monoxygenase"/>
</dbReference>
<dbReference type="PANTHER" id="PTHR24305">
    <property type="entry name" value="CYTOCHROME P450"/>
    <property type="match status" value="1"/>
</dbReference>
<dbReference type="PANTHER" id="PTHR24305:SF230">
    <property type="entry name" value="P450, PUTATIVE (EUROFUNG)-RELATED"/>
    <property type="match status" value="1"/>
</dbReference>
<dbReference type="Pfam" id="PF00067">
    <property type="entry name" value="p450"/>
    <property type="match status" value="1"/>
</dbReference>
<dbReference type="PRINTS" id="PR00463">
    <property type="entry name" value="EP450I"/>
</dbReference>
<dbReference type="PRINTS" id="PR00385">
    <property type="entry name" value="P450"/>
</dbReference>
<dbReference type="SUPFAM" id="SSF48264">
    <property type="entry name" value="Cytochrome P450"/>
    <property type="match status" value="1"/>
</dbReference>
<dbReference type="PROSITE" id="PS00086">
    <property type="entry name" value="CYTOCHROME_P450"/>
    <property type="match status" value="1"/>
</dbReference>
<name>STHF_PHANO</name>
<keyword id="KW-0349">Heme</keyword>
<keyword id="KW-0408">Iron</keyword>
<keyword id="KW-0472">Membrane</keyword>
<keyword id="KW-0479">Metal-binding</keyword>
<keyword id="KW-0503">Monooxygenase</keyword>
<keyword id="KW-0560">Oxidoreductase</keyword>
<keyword id="KW-0812">Transmembrane</keyword>
<keyword id="KW-1133">Transmembrane helix</keyword>
<comment type="function">
    <text evidence="3">Cytochrome P450 monooxygenase; part of the gene cluster that mediates the biosynthesis of the phytotoxin stemphyloxin II (PubMed:31553484). The first step of the pathway is the synthesis of dehydroprobetaenone I by the polyketide synthase sthA and the enoyl reductase sthE via condensation of one acetyl-CoA starter unit with 7 malonyl-CoA units and 5 methylations (PubMed:31553484). The C-terminal reductase (R) domain of sthA catalyzes the reductive release of the polyketide chain (PubMed:31553484). Because sthA lacks a designated enoylreductase (ER) domain, the required activity is provided the enoyl reductase sthE (PubMed:31553484). The short-chain dehydrogenase/reductase sthC then catalyzes reduction of dehydroprobetaenone I to probetaenone I (PubMed:31553484). The cytochrome P450 monooxygenase sthF catalyzes successive epoxidation, oxidation (resulting from epoxide opening) and hydroxylation to install a tertiary alcohol in the decaline ring to yield betaenone C from dehydroprobetaenone I and betaenone B from probetaenone I (PubMed:31553484). The FAD-linked oxidoreductase sthB is responsible for the conversion of betaenone C to betaenone A via an intramolecular aldol reaction between C-1 and C-17 to form the bridged tricyclic system in betaenone A (PubMed:31553484). Finally, the cytochrome P450 monooxygenase sthD catalyzes the hydroxylation of C-15 to afford the final metabolite stemphyloxin II (PubMed:31553484).</text>
</comment>
<comment type="catalytic activity">
    <reaction evidence="3">
        <text>dehydroprobetaenone I + NADPH + O2 + H(+) = epoxybetaenone + NADP(+) + H2O</text>
        <dbReference type="Rhea" id="RHEA:61860"/>
        <dbReference type="ChEBI" id="CHEBI:15377"/>
        <dbReference type="ChEBI" id="CHEBI:15378"/>
        <dbReference type="ChEBI" id="CHEBI:15379"/>
        <dbReference type="ChEBI" id="CHEBI:57783"/>
        <dbReference type="ChEBI" id="CHEBI:58349"/>
        <dbReference type="ChEBI" id="CHEBI:145061"/>
        <dbReference type="ChEBI" id="CHEBI:145069"/>
    </reaction>
    <physiologicalReaction direction="left-to-right" evidence="3">
        <dbReference type="Rhea" id="RHEA:61861"/>
    </physiologicalReaction>
</comment>
<comment type="catalytic activity">
    <reaction evidence="3">
        <text>dehydroprobetaenone I + 3 NADPH + 3 O2 + 3 H(+) = betaenone C + 3 NADP(+) + 3 H2O</text>
        <dbReference type="Rhea" id="RHEA:61856"/>
        <dbReference type="ChEBI" id="CHEBI:15377"/>
        <dbReference type="ChEBI" id="CHEBI:15378"/>
        <dbReference type="ChEBI" id="CHEBI:15379"/>
        <dbReference type="ChEBI" id="CHEBI:57783"/>
        <dbReference type="ChEBI" id="CHEBI:58349"/>
        <dbReference type="ChEBI" id="CHEBI:145053"/>
        <dbReference type="ChEBI" id="CHEBI:145061"/>
    </reaction>
    <physiologicalReaction direction="left-to-right" evidence="3">
        <dbReference type="Rhea" id="RHEA:61857"/>
    </physiologicalReaction>
</comment>
<comment type="catalytic activity">
    <reaction evidence="3">
        <text>probetaenone I + 3 NADPH + 3 O2 + 3 H(+) = betaenone B + 3 NADP(+) + 3 H2O</text>
        <dbReference type="Rhea" id="RHEA:62720"/>
        <dbReference type="ChEBI" id="CHEBI:15377"/>
        <dbReference type="ChEBI" id="CHEBI:15378"/>
        <dbReference type="ChEBI" id="CHEBI:15379"/>
        <dbReference type="ChEBI" id="CHEBI:57783"/>
        <dbReference type="ChEBI" id="CHEBI:58349"/>
        <dbReference type="ChEBI" id="CHEBI:145054"/>
        <dbReference type="ChEBI" id="CHEBI:145062"/>
    </reaction>
    <physiologicalReaction direction="left-to-right" evidence="3">
        <dbReference type="Rhea" id="RHEA:62721"/>
    </physiologicalReaction>
</comment>
<comment type="cofactor">
    <cofactor evidence="1">
        <name>heme</name>
        <dbReference type="ChEBI" id="CHEBI:30413"/>
    </cofactor>
</comment>
<comment type="pathway">
    <text evidence="3">Mycotoxin biosynthesis.</text>
</comment>
<comment type="subcellular location">
    <subcellularLocation>
        <location evidence="2">Membrane</location>
        <topology evidence="2">Multi-pass membrane protein</topology>
    </subcellularLocation>
</comment>
<comment type="similarity">
    <text evidence="5">Belongs to the cytochrome P450 family.</text>
</comment>
<gene>
    <name evidence="4" type="primary">sthF</name>
    <name evidence="7" type="ORF">SNOG_07865</name>
</gene>
<reference key="1">
    <citation type="journal article" date="2007" name="Plant Cell">
        <title>Dothideomycete-plant interactions illuminated by genome sequencing and EST analysis of the wheat pathogen Stagonospora nodorum.</title>
        <authorList>
            <person name="Hane J.K."/>
            <person name="Lowe R.G.T."/>
            <person name="Solomon P.S."/>
            <person name="Tan K.-C."/>
            <person name="Schoch C.L."/>
            <person name="Spatafora J.W."/>
            <person name="Crous P.W."/>
            <person name="Kodira C.D."/>
            <person name="Birren B.W."/>
            <person name="Galagan J.E."/>
            <person name="Torriani S.F.F."/>
            <person name="McDonald B.A."/>
            <person name="Oliver R.P."/>
        </authorList>
    </citation>
    <scope>NUCLEOTIDE SEQUENCE [LARGE SCALE GENOMIC DNA]</scope>
    <source>
        <strain>SN15 / ATCC MYA-4574 / FGSC 10173</strain>
    </source>
</reference>
<reference key="2">
    <citation type="journal article" date="2019" name="Chemistry">
        <title>Biosynthesis of a Tricyclo[6.2.2.02,7]dodecane System by a Berberine Bridge Enzyme-like Intramolecular Aldolase.</title>
        <authorList>
            <person name="Li H."/>
            <person name="Hu J."/>
            <person name="Wei H."/>
            <person name="Solomon P.S."/>
            <person name="Stubbs K.A."/>
            <person name="Chooi Y.H."/>
        </authorList>
    </citation>
    <scope>FUNCTION</scope>
    <scope>CATALYTIC ACTIVITY</scope>
    <scope>PATHWAY</scope>
</reference>
<organism>
    <name type="scientific">Phaeosphaeria nodorum (strain SN15 / ATCC MYA-4574 / FGSC 10173)</name>
    <name type="common">Glume blotch fungus</name>
    <name type="synonym">Parastagonospora nodorum</name>
    <dbReference type="NCBI Taxonomy" id="321614"/>
    <lineage>
        <taxon>Eukaryota</taxon>
        <taxon>Fungi</taxon>
        <taxon>Dikarya</taxon>
        <taxon>Ascomycota</taxon>
        <taxon>Pezizomycotina</taxon>
        <taxon>Dothideomycetes</taxon>
        <taxon>Pleosporomycetidae</taxon>
        <taxon>Pleosporales</taxon>
        <taxon>Pleosporineae</taxon>
        <taxon>Phaeosphaeriaceae</taxon>
        <taxon>Parastagonospora</taxon>
    </lineage>
</organism>
<evidence type="ECO:0000250" key="1">
    <source>
        <dbReference type="UniProtKB" id="P04798"/>
    </source>
</evidence>
<evidence type="ECO:0000255" key="2"/>
<evidence type="ECO:0000269" key="3">
    <source>
    </source>
</evidence>
<evidence type="ECO:0000303" key="4">
    <source>
    </source>
</evidence>
<evidence type="ECO:0000305" key="5"/>
<evidence type="ECO:0000305" key="6">
    <source>
    </source>
</evidence>
<evidence type="ECO:0000312" key="7">
    <source>
        <dbReference type="EMBL" id="EAT85331.1"/>
    </source>
</evidence>
<protein>
    <recommendedName>
        <fullName evidence="4">Cytochrome P450 monooxygenase sthF</fullName>
        <ecNumber evidence="6">1.-.-.-</ecNumber>
    </recommendedName>
    <alternativeName>
        <fullName evidence="4">Stemphyloxin II biosynthesis cluster protein F</fullName>
    </alternativeName>
</protein>
<feature type="chain" id="PRO_0000448652" description="Cytochrome P450 monooxygenase sthF">
    <location>
        <begin position="1"/>
        <end position="513"/>
    </location>
</feature>
<feature type="transmembrane region" description="Helical" evidence="2">
    <location>
        <begin position="13"/>
        <end position="33"/>
    </location>
</feature>
<feature type="transmembrane region" description="Helical" evidence="2">
    <location>
        <begin position="212"/>
        <end position="232"/>
    </location>
</feature>
<feature type="binding site" description="axial binding residue" evidence="1">
    <location>
        <position position="452"/>
    </location>
    <ligand>
        <name>heme</name>
        <dbReference type="ChEBI" id="CHEBI:30413"/>
    </ligand>
    <ligandPart>
        <name>Fe</name>
        <dbReference type="ChEBI" id="CHEBI:18248"/>
    </ligandPart>
</feature>